<reference key="1">
    <citation type="journal article" date="2009" name="PLoS Genet.">
        <title>Organised genome dynamics in the Escherichia coli species results in highly diverse adaptive paths.</title>
        <authorList>
            <person name="Touchon M."/>
            <person name="Hoede C."/>
            <person name="Tenaillon O."/>
            <person name="Barbe V."/>
            <person name="Baeriswyl S."/>
            <person name="Bidet P."/>
            <person name="Bingen E."/>
            <person name="Bonacorsi S."/>
            <person name="Bouchier C."/>
            <person name="Bouvet O."/>
            <person name="Calteau A."/>
            <person name="Chiapello H."/>
            <person name="Clermont O."/>
            <person name="Cruveiller S."/>
            <person name="Danchin A."/>
            <person name="Diard M."/>
            <person name="Dossat C."/>
            <person name="Karoui M.E."/>
            <person name="Frapy E."/>
            <person name="Garry L."/>
            <person name="Ghigo J.M."/>
            <person name="Gilles A.M."/>
            <person name="Johnson J."/>
            <person name="Le Bouguenec C."/>
            <person name="Lescat M."/>
            <person name="Mangenot S."/>
            <person name="Martinez-Jehanne V."/>
            <person name="Matic I."/>
            <person name="Nassif X."/>
            <person name="Oztas S."/>
            <person name="Petit M.A."/>
            <person name="Pichon C."/>
            <person name="Rouy Z."/>
            <person name="Ruf C.S."/>
            <person name="Schneider D."/>
            <person name="Tourret J."/>
            <person name="Vacherie B."/>
            <person name="Vallenet D."/>
            <person name="Medigue C."/>
            <person name="Rocha E.P.C."/>
            <person name="Denamur E."/>
        </authorList>
    </citation>
    <scope>NUCLEOTIDE SEQUENCE [LARGE SCALE GENOMIC DNA]</scope>
    <source>
        <strain>IAI1</strain>
    </source>
</reference>
<feature type="chain" id="PRO_1000130381" description="UPF0225 protein YchJ">
    <location>
        <begin position="1"/>
        <end position="152"/>
    </location>
</feature>
<name>YCHJ_ECO8A</name>
<proteinExistence type="inferred from homology"/>
<protein>
    <recommendedName>
        <fullName evidence="1">UPF0225 protein YchJ</fullName>
    </recommendedName>
</protein>
<accession>B7LXY9</accession>
<evidence type="ECO:0000255" key="1">
    <source>
        <dbReference type="HAMAP-Rule" id="MF_00612"/>
    </source>
</evidence>
<organism>
    <name type="scientific">Escherichia coli O8 (strain IAI1)</name>
    <dbReference type="NCBI Taxonomy" id="585034"/>
    <lineage>
        <taxon>Bacteria</taxon>
        <taxon>Pseudomonadati</taxon>
        <taxon>Pseudomonadota</taxon>
        <taxon>Gammaproteobacteria</taxon>
        <taxon>Enterobacterales</taxon>
        <taxon>Enterobacteriaceae</taxon>
        <taxon>Escherichia</taxon>
    </lineage>
</organism>
<sequence length="152" mass="16990">MSQLCPCGSAVEYSLCCHPYVSGEKVAPDPEHLMRSRYCAFVMQDADYLIKTWHPSCGAAALRAELMAGFAHTEWLGLTVFEHCWQDADNIGFVSFVARFTEGGKTGAIIERSRFLKENGQWYYIDGTRPQFGRNDPCPCGSGKKFKKCCGQ</sequence>
<dbReference type="EMBL" id="CU928160">
    <property type="protein sequence ID" value="CAQ98112.1"/>
    <property type="molecule type" value="Genomic_DNA"/>
</dbReference>
<dbReference type="RefSeq" id="WP_001307143.1">
    <property type="nucleotide sequence ID" value="NC_011741.1"/>
</dbReference>
<dbReference type="SMR" id="B7LXY9"/>
<dbReference type="KEGG" id="ecr:ECIAI1_1253"/>
<dbReference type="HOGENOM" id="CLU_099590_0_0_6"/>
<dbReference type="Gene3D" id="3.10.450.50">
    <property type="match status" value="1"/>
</dbReference>
<dbReference type="HAMAP" id="MF_00612">
    <property type="entry name" value="UPF0225"/>
    <property type="match status" value="1"/>
</dbReference>
<dbReference type="InterPro" id="IPR032710">
    <property type="entry name" value="NTF2-like_dom_sf"/>
</dbReference>
<dbReference type="InterPro" id="IPR004027">
    <property type="entry name" value="SEC_C_motif"/>
</dbReference>
<dbReference type="InterPro" id="IPR023006">
    <property type="entry name" value="UPF0225"/>
</dbReference>
<dbReference type="InterPro" id="IPR048469">
    <property type="entry name" value="YchJ-like_M"/>
</dbReference>
<dbReference type="NCBIfam" id="NF002449">
    <property type="entry name" value="PRK01617.1"/>
    <property type="match status" value="1"/>
</dbReference>
<dbReference type="NCBIfam" id="NF002486">
    <property type="entry name" value="PRK01752.1"/>
    <property type="match status" value="1"/>
</dbReference>
<dbReference type="PANTHER" id="PTHR33747:SF1">
    <property type="entry name" value="ADENYLATE CYCLASE-ASSOCIATED CAP C-TERMINAL DOMAIN-CONTAINING PROTEIN"/>
    <property type="match status" value="1"/>
</dbReference>
<dbReference type="PANTHER" id="PTHR33747">
    <property type="entry name" value="UPF0225 PROTEIN SCO1677"/>
    <property type="match status" value="1"/>
</dbReference>
<dbReference type="Pfam" id="PF02810">
    <property type="entry name" value="SEC-C"/>
    <property type="match status" value="2"/>
</dbReference>
<dbReference type="Pfam" id="PF17775">
    <property type="entry name" value="YchJ_M-like"/>
    <property type="match status" value="1"/>
</dbReference>
<dbReference type="SUPFAM" id="SSF54427">
    <property type="entry name" value="NTF2-like"/>
    <property type="match status" value="1"/>
</dbReference>
<dbReference type="SUPFAM" id="SSF103642">
    <property type="entry name" value="Sec-C motif"/>
    <property type="match status" value="1"/>
</dbReference>
<comment type="similarity">
    <text evidence="1">Belongs to the UPF0225 family.</text>
</comment>
<gene>
    <name evidence="1" type="primary">ychJ</name>
    <name type="ordered locus">ECIAI1_1253</name>
</gene>